<keyword id="KW-0030">Aminoacyl-tRNA synthetase</keyword>
<keyword id="KW-0067">ATP-binding</keyword>
<keyword id="KW-0963">Cytoplasm</keyword>
<keyword id="KW-0436">Ligase</keyword>
<keyword id="KW-0547">Nucleotide-binding</keyword>
<keyword id="KW-0648">Protein biosynthesis</keyword>
<name>SYD_SALCH</name>
<protein>
    <recommendedName>
        <fullName evidence="1">Aspartate--tRNA ligase</fullName>
        <ecNumber evidence="1">6.1.1.12</ecNumber>
    </recommendedName>
    <alternativeName>
        <fullName evidence="1">Aspartyl-tRNA synthetase</fullName>
        <shortName evidence="1">AspRS</shortName>
    </alternativeName>
</protein>
<gene>
    <name evidence="1" type="primary">aspS</name>
    <name type="ordered locus">SCH_1909</name>
</gene>
<sequence length="590" mass="65781">MRTEYCGQLRLSHVGQQVTLCGWVNRRRDLGSLIFIDMRDREGIVQVFFDPDRADALKLASELRNEFCIQVTGTVRARDAKNVNADMATGEIEVLASSLTIINRADSLPLDANHVNTEEARLKYRYLDLRRPEMAQRLKTRAKITSLVRRFMDDHGFLDIETPMLTKATPEGARDYLVPSRVHKGKFYALPQSPQLFKQLLMMSGFDRYYQIVKCFRDEDLRADRQPEFTQIDVEISFMTALQVREVMEALVRHLWLEVKGVDLGDFPVMTFAEAERRYGSDKPDLRNPMELVDVADLLKSVEFAVFAGPANDPKGRVAALRVPGGAQLSRKQIDDYGNFVKIYGAKGLAYIKVNERAKGLDGINSPVAKFLTADIVDAILERTGAQDGDMIFFGADNKKVVADALGALRLKLGKDLSLTDEDKWAPLWVIDFPMFEDDGEGGLTAMHHPFTAPRDMTASELKTAPEEAVANAYDMVINGYEVGGGSVRIHNGEMQQTVFGILGINEQEQREKFGFLLDALKYGTPPHAGLAFGLDRLTMLLTGTDNIRDVIAFPKTTAAACLMTEAPSFANQAALTELGIQVVKKAENN</sequence>
<accession>Q57N96</accession>
<proteinExistence type="inferred from homology"/>
<feature type="chain" id="PRO_0000235555" description="Aspartate--tRNA ligase">
    <location>
        <begin position="1"/>
        <end position="590"/>
    </location>
</feature>
<feature type="region of interest" description="Aspartate" evidence="1">
    <location>
        <begin position="195"/>
        <end position="198"/>
    </location>
</feature>
<feature type="binding site" evidence="1">
    <location>
        <position position="171"/>
    </location>
    <ligand>
        <name>L-aspartate</name>
        <dbReference type="ChEBI" id="CHEBI:29991"/>
    </ligand>
</feature>
<feature type="binding site" evidence="1">
    <location>
        <begin position="217"/>
        <end position="219"/>
    </location>
    <ligand>
        <name>ATP</name>
        <dbReference type="ChEBI" id="CHEBI:30616"/>
    </ligand>
</feature>
<feature type="binding site" evidence="1">
    <location>
        <position position="217"/>
    </location>
    <ligand>
        <name>L-aspartate</name>
        <dbReference type="ChEBI" id="CHEBI:29991"/>
    </ligand>
</feature>
<feature type="binding site" evidence="1">
    <location>
        <position position="226"/>
    </location>
    <ligand>
        <name>ATP</name>
        <dbReference type="ChEBI" id="CHEBI:30616"/>
    </ligand>
</feature>
<feature type="binding site" evidence="1">
    <location>
        <position position="448"/>
    </location>
    <ligand>
        <name>L-aspartate</name>
        <dbReference type="ChEBI" id="CHEBI:29991"/>
    </ligand>
</feature>
<feature type="binding site" evidence="1">
    <location>
        <position position="482"/>
    </location>
    <ligand>
        <name>ATP</name>
        <dbReference type="ChEBI" id="CHEBI:30616"/>
    </ligand>
</feature>
<feature type="binding site" evidence="1">
    <location>
        <position position="489"/>
    </location>
    <ligand>
        <name>L-aspartate</name>
        <dbReference type="ChEBI" id="CHEBI:29991"/>
    </ligand>
</feature>
<feature type="binding site" evidence="1">
    <location>
        <begin position="534"/>
        <end position="537"/>
    </location>
    <ligand>
        <name>ATP</name>
        <dbReference type="ChEBI" id="CHEBI:30616"/>
    </ligand>
</feature>
<evidence type="ECO:0000255" key="1">
    <source>
        <dbReference type="HAMAP-Rule" id="MF_00044"/>
    </source>
</evidence>
<reference key="1">
    <citation type="journal article" date="2005" name="Nucleic Acids Res.">
        <title>The genome sequence of Salmonella enterica serovar Choleraesuis, a highly invasive and resistant zoonotic pathogen.</title>
        <authorList>
            <person name="Chiu C.-H."/>
            <person name="Tang P."/>
            <person name="Chu C."/>
            <person name="Hu S."/>
            <person name="Bao Q."/>
            <person name="Yu J."/>
            <person name="Chou Y.-Y."/>
            <person name="Wang H.-S."/>
            <person name="Lee Y.-S."/>
        </authorList>
    </citation>
    <scope>NUCLEOTIDE SEQUENCE [LARGE SCALE GENOMIC DNA]</scope>
    <source>
        <strain>SC-B67</strain>
    </source>
</reference>
<comment type="function">
    <text evidence="1">Catalyzes the attachment of L-aspartate to tRNA(Asp) in a two-step reaction: L-aspartate is first activated by ATP to form Asp-AMP and then transferred to the acceptor end of tRNA(Asp).</text>
</comment>
<comment type="catalytic activity">
    <reaction evidence="1">
        <text>tRNA(Asp) + L-aspartate + ATP = L-aspartyl-tRNA(Asp) + AMP + diphosphate</text>
        <dbReference type="Rhea" id="RHEA:19649"/>
        <dbReference type="Rhea" id="RHEA-COMP:9660"/>
        <dbReference type="Rhea" id="RHEA-COMP:9678"/>
        <dbReference type="ChEBI" id="CHEBI:29991"/>
        <dbReference type="ChEBI" id="CHEBI:30616"/>
        <dbReference type="ChEBI" id="CHEBI:33019"/>
        <dbReference type="ChEBI" id="CHEBI:78442"/>
        <dbReference type="ChEBI" id="CHEBI:78516"/>
        <dbReference type="ChEBI" id="CHEBI:456215"/>
        <dbReference type="EC" id="6.1.1.12"/>
    </reaction>
</comment>
<comment type="subunit">
    <text evidence="1">Homodimer.</text>
</comment>
<comment type="subcellular location">
    <subcellularLocation>
        <location evidence="1">Cytoplasm</location>
    </subcellularLocation>
</comment>
<comment type="similarity">
    <text evidence="1">Belongs to the class-II aminoacyl-tRNA synthetase family. Type 1 subfamily.</text>
</comment>
<organism>
    <name type="scientific">Salmonella choleraesuis (strain SC-B67)</name>
    <dbReference type="NCBI Taxonomy" id="321314"/>
    <lineage>
        <taxon>Bacteria</taxon>
        <taxon>Pseudomonadati</taxon>
        <taxon>Pseudomonadota</taxon>
        <taxon>Gammaproteobacteria</taxon>
        <taxon>Enterobacterales</taxon>
        <taxon>Enterobacteriaceae</taxon>
        <taxon>Salmonella</taxon>
    </lineage>
</organism>
<dbReference type="EC" id="6.1.1.12" evidence="1"/>
<dbReference type="EMBL" id="AE017220">
    <property type="protein sequence ID" value="AAX65815.1"/>
    <property type="molecule type" value="Genomic_DNA"/>
</dbReference>
<dbReference type="RefSeq" id="WP_011264316.1">
    <property type="nucleotide sequence ID" value="NC_006905.1"/>
</dbReference>
<dbReference type="SMR" id="Q57N96"/>
<dbReference type="KEGG" id="sec:SCH_1909"/>
<dbReference type="HOGENOM" id="CLU_014330_3_2_6"/>
<dbReference type="Proteomes" id="UP000000538">
    <property type="component" value="Chromosome"/>
</dbReference>
<dbReference type="GO" id="GO:0005737">
    <property type="term" value="C:cytoplasm"/>
    <property type="evidence" value="ECO:0007669"/>
    <property type="project" value="UniProtKB-SubCell"/>
</dbReference>
<dbReference type="GO" id="GO:0004815">
    <property type="term" value="F:aspartate-tRNA ligase activity"/>
    <property type="evidence" value="ECO:0007669"/>
    <property type="project" value="UniProtKB-UniRule"/>
</dbReference>
<dbReference type="GO" id="GO:0005524">
    <property type="term" value="F:ATP binding"/>
    <property type="evidence" value="ECO:0007669"/>
    <property type="project" value="UniProtKB-UniRule"/>
</dbReference>
<dbReference type="GO" id="GO:0003676">
    <property type="term" value="F:nucleic acid binding"/>
    <property type="evidence" value="ECO:0007669"/>
    <property type="project" value="InterPro"/>
</dbReference>
<dbReference type="GO" id="GO:0006422">
    <property type="term" value="P:aspartyl-tRNA aminoacylation"/>
    <property type="evidence" value="ECO:0007669"/>
    <property type="project" value="UniProtKB-UniRule"/>
</dbReference>
<dbReference type="CDD" id="cd00777">
    <property type="entry name" value="AspRS_core"/>
    <property type="match status" value="1"/>
</dbReference>
<dbReference type="CDD" id="cd04317">
    <property type="entry name" value="EcAspRS_like_N"/>
    <property type="match status" value="1"/>
</dbReference>
<dbReference type="FunFam" id="2.40.50.140:FF:000080">
    <property type="entry name" value="Aspartate--tRNA ligase"/>
    <property type="match status" value="1"/>
</dbReference>
<dbReference type="FunFam" id="3.30.1360.30:FF:000001">
    <property type="entry name" value="Aspartate--tRNA ligase"/>
    <property type="match status" value="1"/>
</dbReference>
<dbReference type="Gene3D" id="3.30.930.10">
    <property type="entry name" value="Bira Bifunctional Protein, Domain 2"/>
    <property type="match status" value="1"/>
</dbReference>
<dbReference type="Gene3D" id="3.30.1360.30">
    <property type="entry name" value="GAD-like domain"/>
    <property type="match status" value="1"/>
</dbReference>
<dbReference type="Gene3D" id="2.40.50.140">
    <property type="entry name" value="Nucleic acid-binding proteins"/>
    <property type="match status" value="1"/>
</dbReference>
<dbReference type="HAMAP" id="MF_00044">
    <property type="entry name" value="Asp_tRNA_synth_type1"/>
    <property type="match status" value="1"/>
</dbReference>
<dbReference type="InterPro" id="IPR004364">
    <property type="entry name" value="Aa-tRNA-synt_II"/>
</dbReference>
<dbReference type="InterPro" id="IPR006195">
    <property type="entry name" value="aa-tRNA-synth_II"/>
</dbReference>
<dbReference type="InterPro" id="IPR045864">
    <property type="entry name" value="aa-tRNA-synth_II/BPL/LPL"/>
</dbReference>
<dbReference type="InterPro" id="IPR004524">
    <property type="entry name" value="Asp-tRNA-ligase_1"/>
</dbReference>
<dbReference type="InterPro" id="IPR047089">
    <property type="entry name" value="Asp-tRNA-ligase_1_N"/>
</dbReference>
<dbReference type="InterPro" id="IPR002312">
    <property type="entry name" value="Asp/Asn-tRNA-synth_IIb"/>
</dbReference>
<dbReference type="InterPro" id="IPR047090">
    <property type="entry name" value="AspRS_core"/>
</dbReference>
<dbReference type="InterPro" id="IPR004115">
    <property type="entry name" value="GAD-like_sf"/>
</dbReference>
<dbReference type="InterPro" id="IPR029351">
    <property type="entry name" value="GAD_dom"/>
</dbReference>
<dbReference type="InterPro" id="IPR012340">
    <property type="entry name" value="NA-bd_OB-fold"/>
</dbReference>
<dbReference type="InterPro" id="IPR004365">
    <property type="entry name" value="NA-bd_OB_tRNA"/>
</dbReference>
<dbReference type="NCBIfam" id="TIGR00459">
    <property type="entry name" value="aspS_bact"/>
    <property type="match status" value="1"/>
</dbReference>
<dbReference type="NCBIfam" id="NF001750">
    <property type="entry name" value="PRK00476.1"/>
    <property type="match status" value="1"/>
</dbReference>
<dbReference type="PANTHER" id="PTHR22594:SF5">
    <property type="entry name" value="ASPARTATE--TRNA LIGASE, MITOCHONDRIAL"/>
    <property type="match status" value="1"/>
</dbReference>
<dbReference type="PANTHER" id="PTHR22594">
    <property type="entry name" value="ASPARTYL/LYSYL-TRNA SYNTHETASE"/>
    <property type="match status" value="1"/>
</dbReference>
<dbReference type="Pfam" id="PF02938">
    <property type="entry name" value="GAD"/>
    <property type="match status" value="1"/>
</dbReference>
<dbReference type="Pfam" id="PF00152">
    <property type="entry name" value="tRNA-synt_2"/>
    <property type="match status" value="1"/>
</dbReference>
<dbReference type="Pfam" id="PF01336">
    <property type="entry name" value="tRNA_anti-codon"/>
    <property type="match status" value="1"/>
</dbReference>
<dbReference type="PRINTS" id="PR01042">
    <property type="entry name" value="TRNASYNTHASP"/>
</dbReference>
<dbReference type="SUPFAM" id="SSF55681">
    <property type="entry name" value="Class II aaRS and biotin synthetases"/>
    <property type="match status" value="1"/>
</dbReference>
<dbReference type="SUPFAM" id="SSF55261">
    <property type="entry name" value="GAD domain-like"/>
    <property type="match status" value="1"/>
</dbReference>
<dbReference type="SUPFAM" id="SSF50249">
    <property type="entry name" value="Nucleic acid-binding proteins"/>
    <property type="match status" value="1"/>
</dbReference>
<dbReference type="PROSITE" id="PS50862">
    <property type="entry name" value="AA_TRNA_LIGASE_II"/>
    <property type="match status" value="1"/>
</dbReference>